<gene>
    <name type="primary">Cdk5</name>
    <name type="ORF">CG8203</name>
</gene>
<evidence type="ECO:0000250" key="1"/>
<evidence type="ECO:0000255" key="2">
    <source>
        <dbReference type="PROSITE-ProRule" id="PRU00159"/>
    </source>
</evidence>
<evidence type="ECO:0000255" key="3">
    <source>
        <dbReference type="PROSITE-ProRule" id="PRU10027"/>
    </source>
</evidence>
<evidence type="ECO:0000305" key="4"/>
<name>CDK5_DROME</name>
<feature type="chain" id="PRO_0000085788" description="Cyclin-dependent kinase 5 homolog">
    <location>
        <begin position="1"/>
        <end position="294"/>
    </location>
</feature>
<feature type="domain" description="Protein kinase" evidence="2">
    <location>
        <begin position="4"/>
        <end position="286"/>
    </location>
</feature>
<feature type="active site" description="Proton acceptor" evidence="2 3">
    <location>
        <position position="126"/>
    </location>
</feature>
<feature type="binding site" evidence="2">
    <location>
        <begin position="10"/>
        <end position="18"/>
    </location>
    <ligand>
        <name>ATP</name>
        <dbReference type="ChEBI" id="CHEBI:30616"/>
    </ligand>
</feature>
<feature type="binding site" evidence="2">
    <location>
        <position position="33"/>
    </location>
    <ligand>
        <name>ATP</name>
        <dbReference type="ChEBI" id="CHEBI:30616"/>
    </ligand>
</feature>
<feature type="modified residue" description="Phosphothreonine" evidence="1">
    <location>
        <position position="14"/>
    </location>
</feature>
<feature type="modified residue" description="Phosphotyrosine" evidence="1">
    <location>
        <position position="15"/>
    </location>
</feature>
<feature type="modified residue" description="Phosphoserine" evidence="1">
    <location>
        <position position="159"/>
    </location>
</feature>
<feature type="sequence conflict" description="In Ref. 1; AAA63754." evidence="4" ref="1">
    <original>D</original>
    <variation>A</variation>
    <location>
        <position position="25"/>
    </location>
</feature>
<feature type="sequence conflict" description="In Ref. 1; AAA63754." evidence="4" ref="1">
    <original>W</original>
    <variation>L</variation>
    <location>
        <position position="166"/>
    </location>
</feature>
<dbReference type="EC" id="2.7.11.22"/>
<dbReference type="EMBL" id="U21552">
    <property type="protein sequence ID" value="AAA63754.1"/>
    <property type="molecule type" value="Genomic_DNA"/>
</dbReference>
<dbReference type="EMBL" id="X99511">
    <property type="protein sequence ID" value="CAA67861.1"/>
    <property type="molecule type" value="mRNA"/>
</dbReference>
<dbReference type="EMBL" id="AE013599">
    <property type="protein sequence ID" value="AAF58119.1"/>
    <property type="molecule type" value="Genomic_DNA"/>
</dbReference>
<dbReference type="EMBL" id="AY061049">
    <property type="protein sequence ID" value="AAL28597.1"/>
    <property type="molecule type" value="mRNA"/>
</dbReference>
<dbReference type="PIR" id="S51008">
    <property type="entry name" value="S51008"/>
</dbReference>
<dbReference type="RefSeq" id="NP_477080.1">
    <property type="nucleotide sequence ID" value="NM_057732.4"/>
</dbReference>
<dbReference type="SMR" id="P48609"/>
<dbReference type="BioGRID" id="62461">
    <property type="interactions" value="44"/>
</dbReference>
<dbReference type="DIP" id="DIP-22131N"/>
<dbReference type="FunCoup" id="P48609">
    <property type="interactions" value="870"/>
</dbReference>
<dbReference type="IntAct" id="P48609">
    <property type="interactions" value="41"/>
</dbReference>
<dbReference type="STRING" id="7227.FBpp0086483"/>
<dbReference type="iPTMnet" id="P48609"/>
<dbReference type="PaxDb" id="7227-FBpp0086483"/>
<dbReference type="DNASU" id="36727"/>
<dbReference type="EnsemblMetazoa" id="FBtr0087350">
    <property type="protein sequence ID" value="FBpp0086483"/>
    <property type="gene ID" value="FBgn0013762"/>
</dbReference>
<dbReference type="GeneID" id="36727"/>
<dbReference type="KEGG" id="dme:Dmel_CG8203"/>
<dbReference type="AGR" id="FB:FBgn0013762"/>
<dbReference type="CTD" id="1020"/>
<dbReference type="FlyBase" id="FBgn0013762">
    <property type="gene designation" value="Cdk5"/>
</dbReference>
<dbReference type="VEuPathDB" id="VectorBase:FBgn0013762"/>
<dbReference type="eggNOG" id="KOG0662">
    <property type="taxonomic scope" value="Eukaryota"/>
</dbReference>
<dbReference type="GeneTree" id="ENSGT00940000160805"/>
<dbReference type="HOGENOM" id="CLU_000288_181_1_1"/>
<dbReference type="InParanoid" id="P48609"/>
<dbReference type="OMA" id="NWQIFVP"/>
<dbReference type="OrthoDB" id="1732493at2759"/>
<dbReference type="PhylomeDB" id="P48609"/>
<dbReference type="BRENDA" id="2.7.11.22">
    <property type="organism ID" value="1994"/>
</dbReference>
<dbReference type="Reactome" id="R-DME-399956">
    <property type="pathway name" value="CRMPs in Sema3A signaling"/>
</dbReference>
<dbReference type="Reactome" id="R-DME-6804756">
    <property type="pathway name" value="Regulation of TP53 Activity through Phosphorylation"/>
</dbReference>
<dbReference type="Reactome" id="R-DME-9841922">
    <property type="pathway name" value="MLL4 and MLL3 complexes regulate expression of PPARG target genes in adipogenesis and hepatic steatosis"/>
</dbReference>
<dbReference type="SignaLink" id="P48609"/>
<dbReference type="BioGRID-ORCS" id="36727">
    <property type="hits" value="0 hits in 3 CRISPR screens"/>
</dbReference>
<dbReference type="GenomeRNAi" id="36727"/>
<dbReference type="PRO" id="PR:P48609"/>
<dbReference type="Proteomes" id="UP000000803">
    <property type="component" value="Chromosome 2R"/>
</dbReference>
<dbReference type="Bgee" id="FBgn0013762">
    <property type="expression patterns" value="Expressed in embryonic/larval hemocyte (Drosophila) and 105 other cell types or tissues"/>
</dbReference>
<dbReference type="GO" id="GO:0005737">
    <property type="term" value="C:cytoplasm"/>
    <property type="evidence" value="ECO:0000318"/>
    <property type="project" value="GO_Central"/>
</dbReference>
<dbReference type="GO" id="GO:0005634">
    <property type="term" value="C:nucleus"/>
    <property type="evidence" value="ECO:0000318"/>
    <property type="project" value="GO_Central"/>
</dbReference>
<dbReference type="GO" id="GO:0016533">
    <property type="term" value="C:protein kinase 5 complex"/>
    <property type="evidence" value="ECO:0000353"/>
    <property type="project" value="FlyBase"/>
</dbReference>
<dbReference type="GO" id="GO:0005524">
    <property type="term" value="F:ATP binding"/>
    <property type="evidence" value="ECO:0007669"/>
    <property type="project" value="UniProtKB-KW"/>
</dbReference>
<dbReference type="GO" id="GO:0004693">
    <property type="term" value="F:cyclin-dependent protein serine/threonine kinase activity"/>
    <property type="evidence" value="ECO:0000314"/>
    <property type="project" value="FlyBase"/>
</dbReference>
<dbReference type="GO" id="GO:0106310">
    <property type="term" value="F:protein serine kinase activity"/>
    <property type="evidence" value="ECO:0007669"/>
    <property type="project" value="RHEA"/>
</dbReference>
<dbReference type="GO" id="GO:0004674">
    <property type="term" value="F:protein serine/threonine kinase activity"/>
    <property type="evidence" value="ECO:0000314"/>
    <property type="project" value="FlyBase"/>
</dbReference>
<dbReference type="GO" id="GO:0008344">
    <property type="term" value="P:adult locomotory behavior"/>
    <property type="evidence" value="ECO:0000315"/>
    <property type="project" value="FlyBase"/>
</dbReference>
<dbReference type="GO" id="GO:0007409">
    <property type="term" value="P:axonogenesis"/>
    <property type="evidence" value="ECO:0000315"/>
    <property type="project" value="FlyBase"/>
</dbReference>
<dbReference type="GO" id="GO:0051301">
    <property type="term" value="P:cell division"/>
    <property type="evidence" value="ECO:0007669"/>
    <property type="project" value="UniProtKB-KW"/>
</dbReference>
<dbReference type="GO" id="GO:0051642">
    <property type="term" value="P:centrosome localization"/>
    <property type="evidence" value="ECO:0000315"/>
    <property type="project" value="FlyBase"/>
</dbReference>
<dbReference type="GO" id="GO:0008340">
    <property type="term" value="P:determination of adult lifespan"/>
    <property type="evidence" value="ECO:0000315"/>
    <property type="project" value="FlyBase"/>
</dbReference>
<dbReference type="GO" id="GO:0007629">
    <property type="term" value="P:flight behavior"/>
    <property type="evidence" value="ECO:0000315"/>
    <property type="project" value="FlyBase"/>
</dbReference>
<dbReference type="GO" id="GO:0070059">
    <property type="term" value="P:intrinsic apoptotic signaling pathway in response to endoplasmic reticulum stress"/>
    <property type="evidence" value="ECO:0000316"/>
    <property type="project" value="FlyBase"/>
</dbReference>
<dbReference type="GO" id="GO:0035011">
    <property type="term" value="P:melanotic encapsulation of foreign target"/>
    <property type="evidence" value="ECO:0000315"/>
    <property type="project" value="FlyBase"/>
</dbReference>
<dbReference type="GO" id="GO:0008045">
    <property type="term" value="P:motor neuron axon guidance"/>
    <property type="evidence" value="ECO:0000315"/>
    <property type="project" value="FlyBase"/>
</dbReference>
<dbReference type="GO" id="GO:0051402">
    <property type="term" value="P:neuron apoptotic process"/>
    <property type="evidence" value="ECO:0000318"/>
    <property type="project" value="GO_Central"/>
</dbReference>
<dbReference type="GO" id="GO:1901987">
    <property type="term" value="P:regulation of cell cycle phase transition"/>
    <property type="evidence" value="ECO:0000318"/>
    <property type="project" value="GO_Central"/>
</dbReference>
<dbReference type="GO" id="GO:0008582">
    <property type="term" value="P:regulation of synaptic assembly at neuromuscular junction"/>
    <property type="evidence" value="ECO:0000315"/>
    <property type="project" value="FlyBase"/>
</dbReference>
<dbReference type="GO" id="GO:0048489">
    <property type="term" value="P:synaptic vesicle transport"/>
    <property type="evidence" value="ECO:0000318"/>
    <property type="project" value="GO_Central"/>
</dbReference>
<dbReference type="CDD" id="cd07839">
    <property type="entry name" value="STKc_CDK5"/>
    <property type="match status" value="1"/>
</dbReference>
<dbReference type="FunFam" id="3.30.200.20:FF:000144">
    <property type="entry name" value="Cyclin-dependent kinase 5"/>
    <property type="match status" value="1"/>
</dbReference>
<dbReference type="FunFam" id="1.10.510.10:FF:000184">
    <property type="entry name" value="cyclin-dependent kinase 5 homolog"/>
    <property type="match status" value="1"/>
</dbReference>
<dbReference type="Gene3D" id="3.30.200.20">
    <property type="entry name" value="Phosphorylase Kinase, domain 1"/>
    <property type="match status" value="1"/>
</dbReference>
<dbReference type="Gene3D" id="1.10.510.10">
    <property type="entry name" value="Transferase(Phosphotransferase) domain 1"/>
    <property type="match status" value="1"/>
</dbReference>
<dbReference type="InterPro" id="IPR050108">
    <property type="entry name" value="CDK"/>
</dbReference>
<dbReference type="InterPro" id="IPR011009">
    <property type="entry name" value="Kinase-like_dom_sf"/>
</dbReference>
<dbReference type="InterPro" id="IPR000719">
    <property type="entry name" value="Prot_kinase_dom"/>
</dbReference>
<dbReference type="InterPro" id="IPR017441">
    <property type="entry name" value="Protein_kinase_ATP_BS"/>
</dbReference>
<dbReference type="InterPro" id="IPR008271">
    <property type="entry name" value="Ser/Thr_kinase_AS"/>
</dbReference>
<dbReference type="PANTHER" id="PTHR24056">
    <property type="entry name" value="CELL DIVISION PROTEIN KINASE"/>
    <property type="match status" value="1"/>
</dbReference>
<dbReference type="PANTHER" id="PTHR24056:SF46">
    <property type="entry name" value="CYCLIN-DEPENDENT KINASE 5"/>
    <property type="match status" value="1"/>
</dbReference>
<dbReference type="Pfam" id="PF00069">
    <property type="entry name" value="Pkinase"/>
    <property type="match status" value="1"/>
</dbReference>
<dbReference type="SMART" id="SM00220">
    <property type="entry name" value="S_TKc"/>
    <property type="match status" value="1"/>
</dbReference>
<dbReference type="SUPFAM" id="SSF56112">
    <property type="entry name" value="Protein kinase-like (PK-like)"/>
    <property type="match status" value="1"/>
</dbReference>
<dbReference type="PROSITE" id="PS00107">
    <property type="entry name" value="PROTEIN_KINASE_ATP"/>
    <property type="match status" value="1"/>
</dbReference>
<dbReference type="PROSITE" id="PS50011">
    <property type="entry name" value="PROTEIN_KINASE_DOM"/>
    <property type="match status" value="1"/>
</dbReference>
<dbReference type="PROSITE" id="PS00108">
    <property type="entry name" value="PROTEIN_KINASE_ST"/>
    <property type="match status" value="1"/>
</dbReference>
<keyword id="KW-0067">ATP-binding</keyword>
<keyword id="KW-0131">Cell cycle</keyword>
<keyword id="KW-0132">Cell division</keyword>
<keyword id="KW-0418">Kinase</keyword>
<keyword id="KW-0547">Nucleotide-binding</keyword>
<keyword id="KW-0597">Phosphoprotein</keyword>
<keyword id="KW-1185">Reference proteome</keyword>
<keyword id="KW-0723">Serine/threonine-protein kinase</keyword>
<keyword id="KW-0808">Transferase</keyword>
<proteinExistence type="evidence at protein level"/>
<sequence length="294" mass="33180">MQKYDKMEKIGEGTYGTVFKGRNRDTMEIVALKRVRLDEDDEGVPSSALREICLLKELKHKNIVRLIDVLHSDKKLTLVFEHCDQDLKKYFDSLNGEIDMAVCRSFMLQLLRGLAFCHSHNVLHRDLKPQNLLINKNGELKLADFGLARAFGIPVKCYSAEVVTLWYRPPDVLFGAKLYTTSIDMWSAGCILAELADAGRPLFPGSDVLDQLMKIFRVLGTPNEDSWPGVSHLSDYVALPSFPAITSWSQLVPRLNSKGRDLLQKLLICRPNQRISAEAAMQHPYFTDSSSSGH</sequence>
<protein>
    <recommendedName>
        <fullName>Cyclin-dependent kinase 5 homolog</fullName>
        <ecNumber>2.7.11.22</ecNumber>
    </recommendedName>
    <alternativeName>
        <fullName>Cell division protein kinase 5</fullName>
    </alternativeName>
</protein>
<organism>
    <name type="scientific">Drosophila melanogaster</name>
    <name type="common">Fruit fly</name>
    <dbReference type="NCBI Taxonomy" id="7227"/>
    <lineage>
        <taxon>Eukaryota</taxon>
        <taxon>Metazoa</taxon>
        <taxon>Ecdysozoa</taxon>
        <taxon>Arthropoda</taxon>
        <taxon>Hexapoda</taxon>
        <taxon>Insecta</taxon>
        <taxon>Pterygota</taxon>
        <taxon>Neoptera</taxon>
        <taxon>Endopterygota</taxon>
        <taxon>Diptera</taxon>
        <taxon>Brachycera</taxon>
        <taxon>Muscomorpha</taxon>
        <taxon>Ephydroidea</taxon>
        <taxon>Drosophilidae</taxon>
        <taxon>Drosophila</taxon>
        <taxon>Sophophora</taxon>
    </lineage>
</organism>
<reference key="1">
    <citation type="journal article" date="1994" name="FEBS Lett.">
        <title>Cloning and characterization of the Drosophila melanogaster CDK5 homolog.</title>
        <authorList>
            <person name="Hellmich M.R."/>
            <person name="Kennison J.A."/>
            <person name="Hampton L.L."/>
            <person name="Battey J.F."/>
        </authorList>
    </citation>
    <scope>NUCLEOTIDE SEQUENCE [GENOMIC DNA]</scope>
    <source>
        <strain>Oregon-R</strain>
    </source>
</reference>
<reference key="2">
    <citation type="journal article" date="1996" name="Mol. Biol. Cell">
        <title>Novel members of the cdc2-related kinase family in Drosophila: cdk4/6, cdk5, PFTAIRE, and PITSLRE kinase.</title>
        <authorList>
            <person name="Sauer K."/>
            <person name="Weigmann K."/>
            <person name="Sigrist S."/>
            <person name="Lehner C.F."/>
        </authorList>
    </citation>
    <scope>NUCLEOTIDE SEQUENCE [MRNA]</scope>
</reference>
<reference key="3">
    <citation type="journal article" date="2000" name="Science">
        <title>The genome sequence of Drosophila melanogaster.</title>
        <authorList>
            <person name="Adams M.D."/>
            <person name="Celniker S.E."/>
            <person name="Holt R.A."/>
            <person name="Evans C.A."/>
            <person name="Gocayne J.D."/>
            <person name="Amanatides P.G."/>
            <person name="Scherer S.E."/>
            <person name="Li P.W."/>
            <person name="Hoskins R.A."/>
            <person name="Galle R.F."/>
            <person name="George R.A."/>
            <person name="Lewis S.E."/>
            <person name="Richards S."/>
            <person name="Ashburner M."/>
            <person name="Henderson S.N."/>
            <person name="Sutton G.G."/>
            <person name="Wortman J.R."/>
            <person name="Yandell M.D."/>
            <person name="Zhang Q."/>
            <person name="Chen L.X."/>
            <person name="Brandon R.C."/>
            <person name="Rogers Y.-H.C."/>
            <person name="Blazej R.G."/>
            <person name="Champe M."/>
            <person name="Pfeiffer B.D."/>
            <person name="Wan K.H."/>
            <person name="Doyle C."/>
            <person name="Baxter E.G."/>
            <person name="Helt G."/>
            <person name="Nelson C.R."/>
            <person name="Miklos G.L.G."/>
            <person name="Abril J.F."/>
            <person name="Agbayani A."/>
            <person name="An H.-J."/>
            <person name="Andrews-Pfannkoch C."/>
            <person name="Baldwin D."/>
            <person name="Ballew R.M."/>
            <person name="Basu A."/>
            <person name="Baxendale J."/>
            <person name="Bayraktaroglu L."/>
            <person name="Beasley E.M."/>
            <person name="Beeson K.Y."/>
            <person name="Benos P.V."/>
            <person name="Berman B.P."/>
            <person name="Bhandari D."/>
            <person name="Bolshakov S."/>
            <person name="Borkova D."/>
            <person name="Botchan M.R."/>
            <person name="Bouck J."/>
            <person name="Brokstein P."/>
            <person name="Brottier P."/>
            <person name="Burtis K.C."/>
            <person name="Busam D.A."/>
            <person name="Butler H."/>
            <person name="Cadieu E."/>
            <person name="Center A."/>
            <person name="Chandra I."/>
            <person name="Cherry J.M."/>
            <person name="Cawley S."/>
            <person name="Dahlke C."/>
            <person name="Davenport L.B."/>
            <person name="Davies P."/>
            <person name="de Pablos B."/>
            <person name="Delcher A."/>
            <person name="Deng Z."/>
            <person name="Mays A.D."/>
            <person name="Dew I."/>
            <person name="Dietz S.M."/>
            <person name="Dodson K."/>
            <person name="Doup L.E."/>
            <person name="Downes M."/>
            <person name="Dugan-Rocha S."/>
            <person name="Dunkov B.C."/>
            <person name="Dunn P."/>
            <person name="Durbin K.J."/>
            <person name="Evangelista C.C."/>
            <person name="Ferraz C."/>
            <person name="Ferriera S."/>
            <person name="Fleischmann W."/>
            <person name="Fosler C."/>
            <person name="Gabrielian A.E."/>
            <person name="Garg N.S."/>
            <person name="Gelbart W.M."/>
            <person name="Glasser K."/>
            <person name="Glodek A."/>
            <person name="Gong F."/>
            <person name="Gorrell J.H."/>
            <person name="Gu Z."/>
            <person name="Guan P."/>
            <person name="Harris M."/>
            <person name="Harris N.L."/>
            <person name="Harvey D.A."/>
            <person name="Heiman T.J."/>
            <person name="Hernandez J.R."/>
            <person name="Houck J."/>
            <person name="Hostin D."/>
            <person name="Houston K.A."/>
            <person name="Howland T.J."/>
            <person name="Wei M.-H."/>
            <person name="Ibegwam C."/>
            <person name="Jalali M."/>
            <person name="Kalush F."/>
            <person name="Karpen G.H."/>
            <person name="Ke Z."/>
            <person name="Kennison J.A."/>
            <person name="Ketchum K.A."/>
            <person name="Kimmel B.E."/>
            <person name="Kodira C.D."/>
            <person name="Kraft C.L."/>
            <person name="Kravitz S."/>
            <person name="Kulp D."/>
            <person name="Lai Z."/>
            <person name="Lasko P."/>
            <person name="Lei Y."/>
            <person name="Levitsky A.A."/>
            <person name="Li J.H."/>
            <person name="Li Z."/>
            <person name="Liang Y."/>
            <person name="Lin X."/>
            <person name="Liu X."/>
            <person name="Mattei B."/>
            <person name="McIntosh T.C."/>
            <person name="McLeod M.P."/>
            <person name="McPherson D."/>
            <person name="Merkulov G."/>
            <person name="Milshina N.V."/>
            <person name="Mobarry C."/>
            <person name="Morris J."/>
            <person name="Moshrefi A."/>
            <person name="Mount S.M."/>
            <person name="Moy M."/>
            <person name="Murphy B."/>
            <person name="Murphy L."/>
            <person name="Muzny D.M."/>
            <person name="Nelson D.L."/>
            <person name="Nelson D.R."/>
            <person name="Nelson K.A."/>
            <person name="Nixon K."/>
            <person name="Nusskern D.R."/>
            <person name="Pacleb J.M."/>
            <person name="Palazzolo M."/>
            <person name="Pittman G.S."/>
            <person name="Pan S."/>
            <person name="Pollard J."/>
            <person name="Puri V."/>
            <person name="Reese M.G."/>
            <person name="Reinert K."/>
            <person name="Remington K."/>
            <person name="Saunders R.D.C."/>
            <person name="Scheeler F."/>
            <person name="Shen H."/>
            <person name="Shue B.C."/>
            <person name="Siden-Kiamos I."/>
            <person name="Simpson M."/>
            <person name="Skupski M.P."/>
            <person name="Smith T.J."/>
            <person name="Spier E."/>
            <person name="Spradling A.C."/>
            <person name="Stapleton M."/>
            <person name="Strong R."/>
            <person name="Sun E."/>
            <person name="Svirskas R."/>
            <person name="Tector C."/>
            <person name="Turner R."/>
            <person name="Venter E."/>
            <person name="Wang A.H."/>
            <person name="Wang X."/>
            <person name="Wang Z.-Y."/>
            <person name="Wassarman D.A."/>
            <person name="Weinstock G.M."/>
            <person name="Weissenbach J."/>
            <person name="Williams S.M."/>
            <person name="Woodage T."/>
            <person name="Worley K.C."/>
            <person name="Wu D."/>
            <person name="Yang S."/>
            <person name="Yao Q.A."/>
            <person name="Ye J."/>
            <person name="Yeh R.-F."/>
            <person name="Zaveri J.S."/>
            <person name="Zhan M."/>
            <person name="Zhang G."/>
            <person name="Zhao Q."/>
            <person name="Zheng L."/>
            <person name="Zheng X.H."/>
            <person name="Zhong F.N."/>
            <person name="Zhong W."/>
            <person name="Zhou X."/>
            <person name="Zhu S.C."/>
            <person name="Zhu X."/>
            <person name="Smith H.O."/>
            <person name="Gibbs R.A."/>
            <person name="Myers E.W."/>
            <person name="Rubin G.M."/>
            <person name="Venter J.C."/>
        </authorList>
    </citation>
    <scope>NUCLEOTIDE SEQUENCE [LARGE SCALE GENOMIC DNA]</scope>
    <source>
        <strain>Berkeley</strain>
    </source>
</reference>
<reference key="4">
    <citation type="journal article" date="2002" name="Genome Biol.">
        <title>Annotation of the Drosophila melanogaster euchromatic genome: a systematic review.</title>
        <authorList>
            <person name="Misra S."/>
            <person name="Crosby M.A."/>
            <person name="Mungall C.J."/>
            <person name="Matthews B.B."/>
            <person name="Campbell K.S."/>
            <person name="Hradecky P."/>
            <person name="Huang Y."/>
            <person name="Kaminker J.S."/>
            <person name="Millburn G.H."/>
            <person name="Prochnik S.E."/>
            <person name="Smith C.D."/>
            <person name="Tupy J.L."/>
            <person name="Whitfield E.J."/>
            <person name="Bayraktaroglu L."/>
            <person name="Berman B.P."/>
            <person name="Bettencourt B.R."/>
            <person name="Celniker S.E."/>
            <person name="de Grey A.D.N.J."/>
            <person name="Drysdale R.A."/>
            <person name="Harris N.L."/>
            <person name="Richter J."/>
            <person name="Russo S."/>
            <person name="Schroeder A.J."/>
            <person name="Shu S.Q."/>
            <person name="Stapleton M."/>
            <person name="Yamada C."/>
            <person name="Ashburner M."/>
            <person name="Gelbart W.M."/>
            <person name="Rubin G.M."/>
            <person name="Lewis S.E."/>
        </authorList>
    </citation>
    <scope>GENOME REANNOTATION</scope>
    <source>
        <strain>Berkeley</strain>
    </source>
</reference>
<reference key="5">
    <citation type="journal article" date="2002" name="Genome Biol.">
        <title>A Drosophila full-length cDNA resource.</title>
        <authorList>
            <person name="Stapleton M."/>
            <person name="Carlson J.W."/>
            <person name="Brokstein P."/>
            <person name="Yu C."/>
            <person name="Champe M."/>
            <person name="George R.A."/>
            <person name="Guarin H."/>
            <person name="Kronmiller B."/>
            <person name="Pacleb J.M."/>
            <person name="Park S."/>
            <person name="Wan K.H."/>
            <person name="Rubin G.M."/>
            <person name="Celniker S.E."/>
        </authorList>
    </citation>
    <scope>NUCLEOTIDE SEQUENCE [LARGE SCALE MRNA]</scope>
    <source>
        <strain>Berkeley</strain>
        <tissue>Embryo</tissue>
    </source>
</reference>
<comment type="function">
    <text evidence="1">Probably involved in the control of the cell cycle. Interacts with D1 and D3-type G1 cyclins. Possible regulator of neuronal differentiation and/or development (By similarity).</text>
</comment>
<comment type="catalytic activity">
    <reaction>
        <text>L-seryl-[protein] + ATP = O-phospho-L-seryl-[protein] + ADP + H(+)</text>
        <dbReference type="Rhea" id="RHEA:17989"/>
        <dbReference type="Rhea" id="RHEA-COMP:9863"/>
        <dbReference type="Rhea" id="RHEA-COMP:11604"/>
        <dbReference type="ChEBI" id="CHEBI:15378"/>
        <dbReference type="ChEBI" id="CHEBI:29999"/>
        <dbReference type="ChEBI" id="CHEBI:30616"/>
        <dbReference type="ChEBI" id="CHEBI:83421"/>
        <dbReference type="ChEBI" id="CHEBI:456216"/>
        <dbReference type="EC" id="2.7.11.22"/>
    </reaction>
</comment>
<comment type="catalytic activity">
    <reaction>
        <text>L-threonyl-[protein] + ATP = O-phospho-L-threonyl-[protein] + ADP + H(+)</text>
        <dbReference type="Rhea" id="RHEA:46608"/>
        <dbReference type="Rhea" id="RHEA-COMP:11060"/>
        <dbReference type="Rhea" id="RHEA-COMP:11605"/>
        <dbReference type="ChEBI" id="CHEBI:15378"/>
        <dbReference type="ChEBI" id="CHEBI:30013"/>
        <dbReference type="ChEBI" id="CHEBI:30616"/>
        <dbReference type="ChEBI" id="CHEBI:61977"/>
        <dbReference type="ChEBI" id="CHEBI:456216"/>
        <dbReference type="EC" id="2.7.11.22"/>
    </reaction>
</comment>
<comment type="interaction">
    <interactant intactId="EBI-94216">
        <id>P48609</id>
    </interactant>
    <interactant intactId="EBI-195485">
        <id>P25008</id>
        <label>CycC</label>
    </interactant>
    <organismsDiffer>false</organismsDiffer>
    <experiments>4</experiments>
</comment>
<comment type="tissue specificity">
    <text>Abundantly expressed in all adult tissues. Lower levels found in larvae and early embryos. Barely detectable in late embryos.</text>
</comment>
<comment type="similarity">
    <text evidence="4">Belongs to the protein kinase superfamily. CMGC Ser/Thr protein kinase family. CDC2/CDKX subfamily.</text>
</comment>
<accession>P48609</accession>
<accession>Q94878</accession>
<accession>Q9V7D8</accession>